<dbReference type="EC" id="2.4.1.21" evidence="1"/>
<dbReference type="EMBL" id="AE016877">
    <property type="protein sequence ID" value="AAP11764.1"/>
    <property type="molecule type" value="Genomic_DNA"/>
</dbReference>
<dbReference type="RefSeq" id="NP_834563.1">
    <property type="nucleotide sequence ID" value="NC_004722.1"/>
</dbReference>
<dbReference type="RefSeq" id="WP_011110443.1">
    <property type="nucleotide sequence ID" value="NC_004722.1"/>
</dbReference>
<dbReference type="SMR" id="Q816G8"/>
<dbReference type="STRING" id="226900.BC_4864"/>
<dbReference type="CAZy" id="GT5">
    <property type="family name" value="Glycosyltransferase Family 5"/>
</dbReference>
<dbReference type="KEGG" id="bce:BC4864"/>
<dbReference type="PATRIC" id="fig|226900.8.peg.5036"/>
<dbReference type="HOGENOM" id="CLU_009583_18_2_9"/>
<dbReference type="OrthoDB" id="9808590at2"/>
<dbReference type="UniPathway" id="UPA00164"/>
<dbReference type="Proteomes" id="UP000001417">
    <property type="component" value="Chromosome"/>
</dbReference>
<dbReference type="GO" id="GO:0009011">
    <property type="term" value="F:alpha-1,4-glucan glucosyltransferase (ADP-glucose donor) activity"/>
    <property type="evidence" value="ECO:0007669"/>
    <property type="project" value="UniProtKB-UniRule"/>
</dbReference>
<dbReference type="GO" id="GO:0004373">
    <property type="term" value="F:alpha-1,4-glucan glucosyltransferase (UDP-glucose donor) activity"/>
    <property type="evidence" value="ECO:0007669"/>
    <property type="project" value="InterPro"/>
</dbReference>
<dbReference type="GO" id="GO:0005978">
    <property type="term" value="P:glycogen biosynthetic process"/>
    <property type="evidence" value="ECO:0007669"/>
    <property type="project" value="UniProtKB-UniRule"/>
</dbReference>
<dbReference type="CDD" id="cd03791">
    <property type="entry name" value="GT5_Glycogen_synthase_DULL1-like"/>
    <property type="match status" value="1"/>
</dbReference>
<dbReference type="FunFam" id="3.40.50.2000:FF:000175">
    <property type="entry name" value="Glycogen synthase"/>
    <property type="match status" value="1"/>
</dbReference>
<dbReference type="Gene3D" id="3.40.50.2000">
    <property type="entry name" value="Glycogen Phosphorylase B"/>
    <property type="match status" value="2"/>
</dbReference>
<dbReference type="HAMAP" id="MF_00484">
    <property type="entry name" value="Glycogen_synth"/>
    <property type="match status" value="1"/>
</dbReference>
<dbReference type="InterPro" id="IPR001296">
    <property type="entry name" value="Glyco_trans_1"/>
</dbReference>
<dbReference type="InterPro" id="IPR011835">
    <property type="entry name" value="GS/SS"/>
</dbReference>
<dbReference type="InterPro" id="IPR013534">
    <property type="entry name" value="Starch_synth_cat_dom"/>
</dbReference>
<dbReference type="NCBIfam" id="TIGR02095">
    <property type="entry name" value="glgA"/>
    <property type="match status" value="1"/>
</dbReference>
<dbReference type="NCBIfam" id="NF001898">
    <property type="entry name" value="PRK00654.1-1"/>
    <property type="match status" value="1"/>
</dbReference>
<dbReference type="NCBIfam" id="NF001899">
    <property type="entry name" value="PRK00654.1-2"/>
    <property type="match status" value="1"/>
</dbReference>
<dbReference type="PANTHER" id="PTHR45825:SF11">
    <property type="entry name" value="ALPHA AMYLASE DOMAIN-CONTAINING PROTEIN"/>
    <property type="match status" value="1"/>
</dbReference>
<dbReference type="PANTHER" id="PTHR45825">
    <property type="entry name" value="GRANULE-BOUND STARCH SYNTHASE 1, CHLOROPLASTIC/AMYLOPLASTIC"/>
    <property type="match status" value="1"/>
</dbReference>
<dbReference type="Pfam" id="PF08323">
    <property type="entry name" value="Glyco_transf_5"/>
    <property type="match status" value="1"/>
</dbReference>
<dbReference type="Pfam" id="PF00534">
    <property type="entry name" value="Glycos_transf_1"/>
    <property type="match status" value="1"/>
</dbReference>
<dbReference type="SUPFAM" id="SSF53756">
    <property type="entry name" value="UDP-Glycosyltransferase/glycogen phosphorylase"/>
    <property type="match status" value="1"/>
</dbReference>
<feature type="chain" id="PRO_0000188592" description="Glycogen synthase">
    <location>
        <begin position="1"/>
        <end position="476"/>
    </location>
</feature>
<feature type="binding site" evidence="1">
    <location>
        <position position="15"/>
    </location>
    <ligand>
        <name>ADP-alpha-D-glucose</name>
        <dbReference type="ChEBI" id="CHEBI:57498"/>
    </ligand>
</feature>
<reference key="1">
    <citation type="journal article" date="2003" name="Nature">
        <title>Genome sequence of Bacillus cereus and comparative analysis with Bacillus anthracis.</title>
        <authorList>
            <person name="Ivanova N."/>
            <person name="Sorokin A."/>
            <person name="Anderson I."/>
            <person name="Galleron N."/>
            <person name="Candelon B."/>
            <person name="Kapatral V."/>
            <person name="Bhattacharyya A."/>
            <person name="Reznik G."/>
            <person name="Mikhailova N."/>
            <person name="Lapidus A."/>
            <person name="Chu L."/>
            <person name="Mazur M."/>
            <person name="Goltsman E."/>
            <person name="Larsen N."/>
            <person name="D'Souza M."/>
            <person name="Walunas T."/>
            <person name="Grechkin Y."/>
            <person name="Pusch G."/>
            <person name="Haselkorn R."/>
            <person name="Fonstein M."/>
            <person name="Ehrlich S.D."/>
            <person name="Overbeek R."/>
            <person name="Kyrpides N.C."/>
        </authorList>
    </citation>
    <scope>NUCLEOTIDE SEQUENCE [LARGE SCALE GENOMIC DNA]</scope>
    <source>
        <strain>ATCC 14579 / DSM 31 / CCUG 7414 / JCM 2152 / NBRC 15305 / NCIMB 9373 / NCTC 2599 / NRRL B-3711</strain>
    </source>
</reference>
<comment type="function">
    <text evidence="1">Synthesizes alpha-1,4-glucan chains using ADP-glucose.</text>
</comment>
<comment type="catalytic activity">
    <reaction evidence="1">
        <text>[(1-&gt;4)-alpha-D-glucosyl](n) + ADP-alpha-D-glucose = [(1-&gt;4)-alpha-D-glucosyl](n+1) + ADP + H(+)</text>
        <dbReference type="Rhea" id="RHEA:18189"/>
        <dbReference type="Rhea" id="RHEA-COMP:9584"/>
        <dbReference type="Rhea" id="RHEA-COMP:9587"/>
        <dbReference type="ChEBI" id="CHEBI:15378"/>
        <dbReference type="ChEBI" id="CHEBI:15444"/>
        <dbReference type="ChEBI" id="CHEBI:57498"/>
        <dbReference type="ChEBI" id="CHEBI:456216"/>
        <dbReference type="EC" id="2.4.1.21"/>
    </reaction>
</comment>
<comment type="pathway">
    <text evidence="1">Glycan biosynthesis; glycogen biosynthesis.</text>
</comment>
<comment type="similarity">
    <text evidence="1">Belongs to the glycosyltransferase 1 family. Bacterial/plant glycogen synthase subfamily.</text>
</comment>
<evidence type="ECO:0000255" key="1">
    <source>
        <dbReference type="HAMAP-Rule" id="MF_00484"/>
    </source>
</evidence>
<organism>
    <name type="scientific">Bacillus cereus (strain ATCC 14579 / DSM 31 / CCUG 7414 / JCM 2152 / NBRC 15305 / NCIMB 9373 / NCTC 2599 / NRRL B-3711)</name>
    <dbReference type="NCBI Taxonomy" id="226900"/>
    <lineage>
        <taxon>Bacteria</taxon>
        <taxon>Bacillati</taxon>
        <taxon>Bacillota</taxon>
        <taxon>Bacilli</taxon>
        <taxon>Bacillales</taxon>
        <taxon>Bacillaceae</taxon>
        <taxon>Bacillus</taxon>
        <taxon>Bacillus cereus group</taxon>
    </lineage>
</organism>
<name>GLGA_BACCR</name>
<sequence>MNILFAVSECVPFVKSGGLADVAGALPKELKKLGVDVRIILPNYSLIPQKLRDGCTLHKVINVPLGWRNQYCGILKGEQDGITYYLIDNEYYFKRDSLYGHYDDGERFSYFSKAVLECIPHLDFEVDVLHSHDWHTAMVNFLLREKYQDNPLYERIKTVYTIHNLQFQGVFPPEVIYDLLELGDEYFHSEQLEFYGNVNFMKGGIIASDQITAVSPTYKEEIQYEFFGEKLDGLLRKYNDKLSGIVNGIDTSVYNPETDSYIKAQYDAESLYEKSENKRALQRYFGLPEKEDTPIISMVTRLTKQKGLDLVRTVFREIMEEDVQCIILGSGDSEYEQFFEWMAYEYPEKVKVYIGFNEELAHQVYAGSDLFLMPSLFEPCGLGQLIALAYGTIPIVRETGGLNDTVHSYDEETGEGNGFSFTNFNAHDMLHTIHRAIEFYHDKPVWEQLVKQAMTEDYSWEQSALAYKELYKSLME</sequence>
<gene>
    <name evidence="1" type="primary">glgA</name>
    <name type="ordered locus">BC_4864</name>
</gene>
<accession>Q816G8</accession>
<proteinExistence type="inferred from homology"/>
<keyword id="KW-0320">Glycogen biosynthesis</keyword>
<keyword id="KW-0328">Glycosyltransferase</keyword>
<keyword id="KW-1185">Reference proteome</keyword>
<keyword id="KW-0808">Transferase</keyword>
<protein>
    <recommendedName>
        <fullName evidence="1">Glycogen synthase</fullName>
        <ecNumber evidence="1">2.4.1.21</ecNumber>
    </recommendedName>
    <alternativeName>
        <fullName evidence="1">Starch [bacterial glycogen] synthase</fullName>
    </alternativeName>
</protein>